<sequence length="131" mass="14435">MTTSSYFLLVALGLLLYLCQSSFGTEHTCEPGASPHPQGKCRPELAEFHETMCEVEESLQGGTDDARKKRGRASLLRKRRGFLSMLKARAKRNEASPLPRAGRGIVCECCKNSCTYEEITEYCPPVTEGSG</sequence>
<organism>
    <name type="scientific">Conus quercinus</name>
    <name type="common">Oak cone</name>
    <dbReference type="NCBI Taxonomy" id="101313"/>
    <lineage>
        <taxon>Eukaryota</taxon>
        <taxon>Metazoa</taxon>
        <taxon>Spiralia</taxon>
        <taxon>Lophotrochozoa</taxon>
        <taxon>Mollusca</taxon>
        <taxon>Gastropoda</taxon>
        <taxon>Caenogastropoda</taxon>
        <taxon>Neogastropoda</taxon>
        <taxon>Conoidea</taxon>
        <taxon>Conidae</taxon>
        <taxon>Conus</taxon>
        <taxon>Lividoconus</taxon>
    </lineage>
</organism>
<accession>A0A0B5ABE6</accession>
<comment type="function">
    <text evidence="2">This venom insulin facilitates prey capture by rapidly inducing hypoglycemic shock. Intraperitoneal injection of this peptide into zebrafish lowers blood glucose with the same potency than human insulin. In vivo, when applied to water, this peptide reduces overall locomotor activity of zebrafish larvae, observed as a significant decrease in the percentage of time spent swimming and movement frequency.</text>
</comment>
<comment type="subunit">
    <text evidence="2">Heterodimer of A and B chains; disulfide-linked.</text>
</comment>
<comment type="subcellular location">
    <subcellularLocation>
        <location evidence="2">Secreted</location>
    </subcellularLocation>
</comment>
<comment type="tissue specificity">
    <text evidence="6">Expressed by the venom gland.</text>
</comment>
<comment type="similarity">
    <text>Belongs to the insulin family.</text>
</comment>
<name>INS1A_CONQU</name>
<keyword id="KW-0027">Amidation</keyword>
<keyword id="KW-0119">Carbohydrate metabolism</keyword>
<keyword id="KW-0165">Cleavage on pair of basic residues</keyword>
<keyword id="KW-1015">Disulfide bond</keyword>
<keyword id="KW-0301">Gamma-carboxyglutamic acid</keyword>
<keyword id="KW-0313">Glucose metabolism</keyword>
<keyword id="KW-0372">Hormone</keyword>
<keyword id="KW-0964">Secreted</keyword>
<keyword id="KW-0732">Signal</keyword>
<keyword id="KW-0800">Toxin</keyword>
<reference key="1">
    <citation type="journal article" date="2015" name="Proc. Natl. Acad. Sci. U.S.A.">
        <title>Specialized insulin is used for chemical warfare by fish-hunting cone snails.</title>
        <authorList>
            <person name="Safavi-Hemami H."/>
            <person name="Gajewiak J."/>
            <person name="Karanth S."/>
            <person name="Robinson S.D."/>
            <person name="Ueberheide B."/>
            <person name="Douglass A.D."/>
            <person name="Schlegel A."/>
            <person name="Imperial J.S."/>
            <person name="Watkins M."/>
            <person name="Bandyopadhyay P.K."/>
            <person name="Yandell M."/>
            <person name="Li Q."/>
            <person name="Purcell A.W."/>
            <person name="Norton R.S."/>
            <person name="Ellgaard L."/>
            <person name="Olivera B.M."/>
        </authorList>
    </citation>
    <scope>NUCLEOTIDE SEQUENCE [MRNA]</scope>
    <scope>AMIDATION AT SER-130</scope>
    <source>
        <tissue>Venom gland</tissue>
    </source>
</reference>
<evidence type="ECO:0000250" key="1">
    <source>
        <dbReference type="UniProtKB" id="A0A0B5ABD9"/>
    </source>
</evidence>
<evidence type="ECO:0000250" key="2">
    <source>
        <dbReference type="UniProtKB" id="A0A0B5AC95"/>
    </source>
</evidence>
<evidence type="ECO:0000255" key="3"/>
<evidence type="ECO:0000303" key="4">
    <source>
    </source>
</evidence>
<evidence type="ECO:0000305" key="5"/>
<evidence type="ECO:0000305" key="6">
    <source>
    </source>
</evidence>
<evidence type="ECO:0000312" key="7">
    <source>
        <dbReference type="EMBL" id="AJD85836.1"/>
    </source>
</evidence>
<dbReference type="EMBL" id="KP268604">
    <property type="protein sequence ID" value="AJD85836.1"/>
    <property type="molecule type" value="mRNA"/>
</dbReference>
<dbReference type="GO" id="GO:0005576">
    <property type="term" value="C:extracellular region"/>
    <property type="evidence" value="ECO:0007669"/>
    <property type="project" value="UniProtKB-SubCell"/>
</dbReference>
<dbReference type="GO" id="GO:0005179">
    <property type="term" value="F:hormone activity"/>
    <property type="evidence" value="ECO:0007669"/>
    <property type="project" value="UniProtKB-KW"/>
</dbReference>
<dbReference type="GO" id="GO:0090729">
    <property type="term" value="F:toxin activity"/>
    <property type="evidence" value="ECO:0007669"/>
    <property type="project" value="UniProtKB-KW"/>
</dbReference>
<dbReference type="GO" id="GO:0006006">
    <property type="term" value="P:glucose metabolic process"/>
    <property type="evidence" value="ECO:0007669"/>
    <property type="project" value="UniProtKB-KW"/>
</dbReference>
<dbReference type="CDD" id="cd04366">
    <property type="entry name" value="IlGF_insulin_bombyxin_like"/>
    <property type="match status" value="1"/>
</dbReference>
<dbReference type="Gene3D" id="1.10.100.10">
    <property type="entry name" value="Insulin-like"/>
    <property type="match status" value="1"/>
</dbReference>
<dbReference type="InterPro" id="IPR016179">
    <property type="entry name" value="Insulin-like"/>
</dbReference>
<dbReference type="InterPro" id="IPR036438">
    <property type="entry name" value="Insulin-like_sf"/>
</dbReference>
<dbReference type="InterPro" id="IPR016724">
    <property type="entry name" value="Insulin-rel_pep"/>
</dbReference>
<dbReference type="InterPro" id="IPR022353">
    <property type="entry name" value="Insulin_CS"/>
</dbReference>
<dbReference type="Pfam" id="PF00049">
    <property type="entry name" value="Insulin"/>
    <property type="match status" value="1"/>
</dbReference>
<dbReference type="PIRSF" id="PIRSF018431">
    <property type="entry name" value="Molluscan_insulin_rel_peptide"/>
    <property type="match status" value="1"/>
</dbReference>
<dbReference type="SUPFAM" id="SSF56994">
    <property type="entry name" value="Insulin-like"/>
    <property type="match status" value="1"/>
</dbReference>
<dbReference type="PROSITE" id="PS00262">
    <property type="entry name" value="INSULIN"/>
    <property type="match status" value="1"/>
</dbReference>
<protein>
    <recommendedName>
        <fullName evidence="4">Con-Ins Q1</fullName>
    </recommendedName>
    <alternativeName>
        <fullName evidence="7">Insulin 1</fullName>
    </alternativeName>
    <component>
        <recommendedName>
            <fullName evidence="4">Con-Ins Q1 B chain</fullName>
        </recommendedName>
    </component>
    <component>
        <recommendedName>
            <fullName evidence="4">Con-Ins Q1 A chain</fullName>
        </recommendedName>
    </component>
</protein>
<proteinExistence type="evidence at protein level"/>
<feature type="signal peptide" evidence="3">
    <location>
        <begin position="1"/>
        <end position="24"/>
    </location>
</feature>
<feature type="peptide" id="PRO_5002099671" description="Con-Ins Q1 B chain" evidence="1">
    <location>
        <begin position="25"/>
        <end position="58"/>
    </location>
</feature>
<feature type="propeptide" id="PRO_0000439326" description="C peptide" evidence="1">
    <location>
        <begin position="59"/>
        <end position="92"/>
    </location>
</feature>
<feature type="peptide" id="PRO_0000439327" description="Con-Ins Q1 A chain" evidence="1">
    <location>
        <begin position="93"/>
        <end position="130"/>
    </location>
</feature>
<feature type="modified residue" description="4-carboxyglutamate; partial" evidence="2">
    <location>
        <position position="118"/>
    </location>
</feature>
<feature type="modified residue" description="Serine amide" evidence="6">
    <location>
        <position position="130"/>
    </location>
</feature>
<feature type="disulfide bond" evidence="5">
    <location>
        <begin position="29"/>
        <end position="107"/>
    </location>
</feature>
<feature type="disulfide bond" description="Interchain (between B and A chains)" evidence="2">
    <location>
        <begin position="41"/>
        <end position="110"/>
    </location>
</feature>
<feature type="disulfide bond" description="Interchain (between B and A chains)" evidence="2">
    <location>
        <begin position="53"/>
        <end position="123"/>
    </location>
</feature>
<feature type="disulfide bond" evidence="2">
    <location>
        <begin position="109"/>
        <end position="114"/>
    </location>
</feature>